<comment type="function">
    <text evidence="1">Binds together with bS18 to 16S ribosomal RNA.</text>
</comment>
<comment type="similarity">
    <text evidence="1">Belongs to the bacterial ribosomal protein bS6 family.</text>
</comment>
<keyword id="KW-1185">Reference proteome</keyword>
<keyword id="KW-0687">Ribonucleoprotein</keyword>
<keyword id="KW-0689">Ribosomal protein</keyword>
<keyword id="KW-0694">RNA-binding</keyword>
<keyword id="KW-0699">rRNA-binding</keyword>
<sequence>MTNQPYYETMYILRPTIPEDEVDSHLKKYTEILESAGGEVLDSQMRGKRRLAYPIGKHKEGIYVQLSHQGDGQHIAVLEKAMRLTEDVIRYLTVKQDGPLPAKRVVKTSEKNVKEDKEVENKETTTEDKDQKGDLKETKKSENKDSVTEAEGQKDIKEAKEIENKEIEKKED</sequence>
<organism>
    <name type="scientific">Prochlorococcus marinus (strain MIT 9211)</name>
    <dbReference type="NCBI Taxonomy" id="93059"/>
    <lineage>
        <taxon>Bacteria</taxon>
        <taxon>Bacillati</taxon>
        <taxon>Cyanobacteriota</taxon>
        <taxon>Cyanophyceae</taxon>
        <taxon>Synechococcales</taxon>
        <taxon>Prochlorococcaceae</taxon>
        <taxon>Prochlorococcus</taxon>
    </lineage>
</organism>
<gene>
    <name evidence="1" type="primary">rpsF</name>
    <name evidence="1" type="synonym">rps6</name>
    <name type="ordered locus">P9211_18431</name>
</gene>
<evidence type="ECO:0000255" key="1">
    <source>
        <dbReference type="HAMAP-Rule" id="MF_00360"/>
    </source>
</evidence>
<evidence type="ECO:0000256" key="2">
    <source>
        <dbReference type="SAM" id="MobiDB-lite"/>
    </source>
</evidence>
<evidence type="ECO:0000305" key="3"/>
<name>RS6_PROM4</name>
<protein>
    <recommendedName>
        <fullName evidence="1">Small ribosomal subunit protein bS6</fullName>
    </recommendedName>
    <alternativeName>
        <fullName evidence="3">30S ribosomal protein S6</fullName>
    </alternativeName>
</protein>
<feature type="chain" id="PRO_1000120787" description="Small ribosomal subunit protein bS6">
    <location>
        <begin position="1"/>
        <end position="172"/>
    </location>
</feature>
<feature type="region of interest" description="Disordered" evidence="2">
    <location>
        <begin position="100"/>
        <end position="172"/>
    </location>
</feature>
<feature type="compositionally biased region" description="Basic and acidic residues" evidence="2">
    <location>
        <begin position="107"/>
        <end position="172"/>
    </location>
</feature>
<proteinExistence type="inferred from homology"/>
<reference key="1">
    <citation type="journal article" date="2007" name="PLoS Genet.">
        <title>Patterns and implications of gene gain and loss in the evolution of Prochlorococcus.</title>
        <authorList>
            <person name="Kettler G.C."/>
            <person name="Martiny A.C."/>
            <person name="Huang K."/>
            <person name="Zucker J."/>
            <person name="Coleman M.L."/>
            <person name="Rodrigue S."/>
            <person name="Chen F."/>
            <person name="Lapidus A."/>
            <person name="Ferriera S."/>
            <person name="Johnson J."/>
            <person name="Steglich C."/>
            <person name="Church G.M."/>
            <person name="Richardson P."/>
            <person name="Chisholm S.W."/>
        </authorList>
    </citation>
    <scope>NUCLEOTIDE SEQUENCE [LARGE SCALE GENOMIC DNA]</scope>
    <source>
        <strain>MIT 9211</strain>
    </source>
</reference>
<dbReference type="EMBL" id="CP000878">
    <property type="protein sequence ID" value="ABX09774.1"/>
    <property type="molecule type" value="Genomic_DNA"/>
</dbReference>
<dbReference type="RefSeq" id="WP_012196394.1">
    <property type="nucleotide sequence ID" value="NC_009976.1"/>
</dbReference>
<dbReference type="SMR" id="A9BDR2"/>
<dbReference type="STRING" id="93059.P9211_18431"/>
<dbReference type="KEGG" id="pmj:P9211_18431"/>
<dbReference type="eggNOG" id="COG0360">
    <property type="taxonomic scope" value="Bacteria"/>
</dbReference>
<dbReference type="HOGENOM" id="CLU_113441_4_2_3"/>
<dbReference type="OrthoDB" id="9812702at2"/>
<dbReference type="Proteomes" id="UP000000788">
    <property type="component" value="Chromosome"/>
</dbReference>
<dbReference type="GO" id="GO:0005737">
    <property type="term" value="C:cytoplasm"/>
    <property type="evidence" value="ECO:0007669"/>
    <property type="project" value="UniProtKB-ARBA"/>
</dbReference>
<dbReference type="GO" id="GO:1990904">
    <property type="term" value="C:ribonucleoprotein complex"/>
    <property type="evidence" value="ECO:0007669"/>
    <property type="project" value="UniProtKB-KW"/>
</dbReference>
<dbReference type="GO" id="GO:0005840">
    <property type="term" value="C:ribosome"/>
    <property type="evidence" value="ECO:0007669"/>
    <property type="project" value="UniProtKB-KW"/>
</dbReference>
<dbReference type="GO" id="GO:0070181">
    <property type="term" value="F:small ribosomal subunit rRNA binding"/>
    <property type="evidence" value="ECO:0007669"/>
    <property type="project" value="TreeGrafter"/>
</dbReference>
<dbReference type="GO" id="GO:0003735">
    <property type="term" value="F:structural constituent of ribosome"/>
    <property type="evidence" value="ECO:0007669"/>
    <property type="project" value="InterPro"/>
</dbReference>
<dbReference type="GO" id="GO:0006412">
    <property type="term" value="P:translation"/>
    <property type="evidence" value="ECO:0007669"/>
    <property type="project" value="UniProtKB-UniRule"/>
</dbReference>
<dbReference type="CDD" id="cd15487">
    <property type="entry name" value="bS6_chloro_cyano"/>
    <property type="match status" value="1"/>
</dbReference>
<dbReference type="Gene3D" id="3.30.70.60">
    <property type="match status" value="1"/>
</dbReference>
<dbReference type="HAMAP" id="MF_00360">
    <property type="entry name" value="Ribosomal_bS6"/>
    <property type="match status" value="1"/>
</dbReference>
<dbReference type="InterPro" id="IPR000529">
    <property type="entry name" value="Ribosomal_bS6"/>
</dbReference>
<dbReference type="InterPro" id="IPR035980">
    <property type="entry name" value="Ribosomal_bS6_sf"/>
</dbReference>
<dbReference type="InterPro" id="IPR020814">
    <property type="entry name" value="Ribosomal_S6_plastid/chlpt"/>
</dbReference>
<dbReference type="InterPro" id="IPR014717">
    <property type="entry name" value="Transl_elong_EF1B/ribsomal_bS6"/>
</dbReference>
<dbReference type="NCBIfam" id="TIGR00166">
    <property type="entry name" value="S6"/>
    <property type="match status" value="1"/>
</dbReference>
<dbReference type="PANTHER" id="PTHR21011">
    <property type="entry name" value="MITOCHONDRIAL 28S RIBOSOMAL PROTEIN S6"/>
    <property type="match status" value="1"/>
</dbReference>
<dbReference type="PANTHER" id="PTHR21011:SF1">
    <property type="entry name" value="SMALL RIBOSOMAL SUBUNIT PROTEIN BS6M"/>
    <property type="match status" value="1"/>
</dbReference>
<dbReference type="Pfam" id="PF01250">
    <property type="entry name" value="Ribosomal_S6"/>
    <property type="match status" value="1"/>
</dbReference>
<dbReference type="SUPFAM" id="SSF54995">
    <property type="entry name" value="Ribosomal protein S6"/>
    <property type="match status" value="1"/>
</dbReference>
<accession>A9BDR2</accession>